<accession>Q6G8E2</accession>
<protein>
    <recommendedName>
        <fullName evidence="1">Phosphoenolpyruvate carboxykinase (ATP)</fullName>
        <shortName evidence="1">PCK</shortName>
        <shortName evidence="1">PEP carboxykinase</shortName>
        <shortName evidence="1">PEPCK</shortName>
        <ecNumber evidence="1">4.1.1.49</ecNumber>
    </recommendedName>
</protein>
<reference key="1">
    <citation type="journal article" date="2004" name="Proc. Natl. Acad. Sci. U.S.A.">
        <title>Complete genomes of two clinical Staphylococcus aureus strains: evidence for the rapid evolution of virulence and drug resistance.</title>
        <authorList>
            <person name="Holden M.T.G."/>
            <person name="Feil E.J."/>
            <person name="Lindsay J.A."/>
            <person name="Peacock S.J."/>
            <person name="Day N.P.J."/>
            <person name="Enright M.C."/>
            <person name="Foster T.J."/>
            <person name="Moore C.E."/>
            <person name="Hurst L."/>
            <person name="Atkin R."/>
            <person name="Barron A."/>
            <person name="Bason N."/>
            <person name="Bentley S.D."/>
            <person name="Chillingworth C."/>
            <person name="Chillingworth T."/>
            <person name="Churcher C."/>
            <person name="Clark L."/>
            <person name="Corton C."/>
            <person name="Cronin A."/>
            <person name="Doggett J."/>
            <person name="Dowd L."/>
            <person name="Feltwell T."/>
            <person name="Hance Z."/>
            <person name="Harris B."/>
            <person name="Hauser H."/>
            <person name="Holroyd S."/>
            <person name="Jagels K."/>
            <person name="James K.D."/>
            <person name="Lennard N."/>
            <person name="Line A."/>
            <person name="Mayes R."/>
            <person name="Moule S."/>
            <person name="Mungall K."/>
            <person name="Ormond D."/>
            <person name="Quail M.A."/>
            <person name="Rabbinowitsch E."/>
            <person name="Rutherford K.M."/>
            <person name="Sanders M."/>
            <person name="Sharp S."/>
            <person name="Simmonds M."/>
            <person name="Stevens K."/>
            <person name="Whitehead S."/>
            <person name="Barrell B.G."/>
            <person name="Spratt B.G."/>
            <person name="Parkhill J."/>
        </authorList>
    </citation>
    <scope>NUCLEOTIDE SEQUENCE [LARGE SCALE GENOMIC DNA]</scope>
    <source>
        <strain>MSSA476</strain>
    </source>
</reference>
<sequence>MSVDTYTETTKIDKLLKKPTSHFQLSTTQLYNKILDNNEGVLTELGAVNASTGKYTGRSPKDKFFVSEPSYRDNIDWGEINQPIDEETFLKLYHKVLDYLDKKDELYVFKGYAGSDKDTMLKLTVINELAWHNLFAKNMFIRPESKEEATKIKPNFTIVSAPHFKADPEVDGTKSETFVIISFKHKVILIGGTEYAGEMKKGIFSVMNYLLPMQDIMSMHCSANVGEKGDVALFFGLSGTGKTTLSADPHRKLIGDDEHGWNKNGVFNIEGGCYAKAINLSKEKEPQIFDAIKYGAILENTVVAEDGSVDFEDNRYTENTRAAYPINHIDNIVVPSKAAHPNTIIFLTADAFGVIPPISKLNKDQAMYHFLSGFTSKLAGTERGVTEPEPSFSTCFGAPFFPLHPTVYADLLGELIDLHDVDVYLVNTGWTGGKYGVGRRISLHYTRQMVNQAISGKLKNAEYTKDSTFGLSIPVKIEDVPKTILNPINAWSDKEKYKAQAEDLIQRFEKNFEKFGEKVEHIAEKGSFNK</sequence>
<gene>
    <name evidence="1" type="primary">pckA</name>
    <name type="ordered locus">SAS1712</name>
</gene>
<name>PCKA_STAAS</name>
<keyword id="KW-0067">ATP-binding</keyword>
<keyword id="KW-0963">Cytoplasm</keyword>
<keyword id="KW-0210">Decarboxylase</keyword>
<keyword id="KW-0312">Gluconeogenesis</keyword>
<keyword id="KW-0456">Lyase</keyword>
<keyword id="KW-0464">Manganese</keyword>
<keyword id="KW-0479">Metal-binding</keyword>
<keyword id="KW-0547">Nucleotide-binding</keyword>
<organism>
    <name type="scientific">Staphylococcus aureus (strain MSSA476)</name>
    <dbReference type="NCBI Taxonomy" id="282459"/>
    <lineage>
        <taxon>Bacteria</taxon>
        <taxon>Bacillati</taxon>
        <taxon>Bacillota</taxon>
        <taxon>Bacilli</taxon>
        <taxon>Bacillales</taxon>
        <taxon>Staphylococcaceae</taxon>
        <taxon>Staphylococcus</taxon>
    </lineage>
</organism>
<feature type="chain" id="PRO_0000203847" description="Phosphoenolpyruvate carboxykinase (ATP)">
    <location>
        <begin position="1"/>
        <end position="530"/>
    </location>
</feature>
<feature type="binding site" evidence="1">
    <location>
        <position position="58"/>
    </location>
    <ligand>
        <name>substrate</name>
    </ligand>
</feature>
<feature type="binding site" evidence="1">
    <location>
        <position position="195"/>
    </location>
    <ligand>
        <name>substrate</name>
    </ligand>
</feature>
<feature type="binding site" evidence="1">
    <location>
        <position position="201"/>
    </location>
    <ligand>
        <name>ATP</name>
        <dbReference type="ChEBI" id="CHEBI:30616"/>
    </ligand>
</feature>
<feature type="binding site" evidence="1">
    <location>
        <position position="201"/>
    </location>
    <ligand>
        <name>Mn(2+)</name>
        <dbReference type="ChEBI" id="CHEBI:29035"/>
    </ligand>
</feature>
<feature type="binding site" evidence="1">
    <location>
        <position position="201"/>
    </location>
    <ligand>
        <name>substrate</name>
    </ligand>
</feature>
<feature type="binding site" evidence="1">
    <location>
        <position position="220"/>
    </location>
    <ligand>
        <name>ATP</name>
        <dbReference type="ChEBI" id="CHEBI:30616"/>
    </ligand>
</feature>
<feature type="binding site" evidence="1">
    <location>
        <position position="220"/>
    </location>
    <ligand>
        <name>Mn(2+)</name>
        <dbReference type="ChEBI" id="CHEBI:29035"/>
    </ligand>
</feature>
<feature type="binding site" evidence="1">
    <location>
        <begin position="236"/>
        <end position="244"/>
    </location>
    <ligand>
        <name>ATP</name>
        <dbReference type="ChEBI" id="CHEBI:30616"/>
    </ligand>
</feature>
<feature type="binding site" evidence="1">
    <location>
        <position position="257"/>
    </location>
    <ligand>
        <name>Mn(2+)</name>
        <dbReference type="ChEBI" id="CHEBI:29035"/>
    </ligand>
</feature>
<feature type="binding site" evidence="1">
    <location>
        <position position="285"/>
    </location>
    <ligand>
        <name>ATP</name>
        <dbReference type="ChEBI" id="CHEBI:30616"/>
    </ligand>
</feature>
<feature type="binding site" evidence="1">
    <location>
        <position position="321"/>
    </location>
    <ligand>
        <name>ATP</name>
        <dbReference type="ChEBI" id="CHEBI:30616"/>
    </ligand>
</feature>
<feature type="binding site" evidence="1">
    <location>
        <position position="321"/>
    </location>
    <ligand>
        <name>substrate</name>
    </ligand>
</feature>
<feature type="binding site" evidence="1">
    <location>
        <begin position="440"/>
        <end position="441"/>
    </location>
    <ligand>
        <name>ATP</name>
        <dbReference type="ChEBI" id="CHEBI:30616"/>
    </ligand>
</feature>
<feature type="binding site" evidence="1">
    <location>
        <position position="446"/>
    </location>
    <ligand>
        <name>ATP</name>
        <dbReference type="ChEBI" id="CHEBI:30616"/>
    </ligand>
</feature>
<proteinExistence type="inferred from homology"/>
<comment type="function">
    <text evidence="1">Involved in the gluconeogenesis. Catalyzes the conversion of oxaloacetate (OAA) to phosphoenolpyruvate (PEP) through direct phosphoryl transfer between the nucleoside triphosphate and OAA.</text>
</comment>
<comment type="catalytic activity">
    <reaction evidence="1">
        <text>oxaloacetate + ATP = phosphoenolpyruvate + ADP + CO2</text>
        <dbReference type="Rhea" id="RHEA:18617"/>
        <dbReference type="ChEBI" id="CHEBI:16452"/>
        <dbReference type="ChEBI" id="CHEBI:16526"/>
        <dbReference type="ChEBI" id="CHEBI:30616"/>
        <dbReference type="ChEBI" id="CHEBI:58702"/>
        <dbReference type="ChEBI" id="CHEBI:456216"/>
        <dbReference type="EC" id="4.1.1.49"/>
    </reaction>
</comment>
<comment type="cofactor">
    <cofactor evidence="1">
        <name>Mn(2+)</name>
        <dbReference type="ChEBI" id="CHEBI:29035"/>
    </cofactor>
    <text evidence="1">Binds 1 Mn(2+) ion per subunit.</text>
</comment>
<comment type="pathway">
    <text evidence="1">Carbohydrate biosynthesis; gluconeogenesis.</text>
</comment>
<comment type="subcellular location">
    <subcellularLocation>
        <location evidence="1">Cytoplasm</location>
    </subcellularLocation>
</comment>
<comment type="similarity">
    <text evidence="1">Belongs to the phosphoenolpyruvate carboxykinase (ATP) family.</text>
</comment>
<evidence type="ECO:0000255" key="1">
    <source>
        <dbReference type="HAMAP-Rule" id="MF_00453"/>
    </source>
</evidence>
<dbReference type="EC" id="4.1.1.49" evidence="1"/>
<dbReference type="EMBL" id="BX571857">
    <property type="protein sequence ID" value="CAG43515.1"/>
    <property type="molecule type" value="Genomic_DNA"/>
</dbReference>
<dbReference type="RefSeq" id="WP_000109910.1">
    <property type="nucleotide sequence ID" value="NC_002953.3"/>
</dbReference>
<dbReference type="SMR" id="Q6G8E2"/>
<dbReference type="KEGG" id="sas:SAS1712"/>
<dbReference type="HOGENOM" id="CLU_018247_0_1_9"/>
<dbReference type="UniPathway" id="UPA00138"/>
<dbReference type="GO" id="GO:0005829">
    <property type="term" value="C:cytosol"/>
    <property type="evidence" value="ECO:0007669"/>
    <property type="project" value="TreeGrafter"/>
</dbReference>
<dbReference type="GO" id="GO:0005524">
    <property type="term" value="F:ATP binding"/>
    <property type="evidence" value="ECO:0007669"/>
    <property type="project" value="UniProtKB-UniRule"/>
</dbReference>
<dbReference type="GO" id="GO:0046872">
    <property type="term" value="F:metal ion binding"/>
    <property type="evidence" value="ECO:0007669"/>
    <property type="project" value="UniProtKB-KW"/>
</dbReference>
<dbReference type="GO" id="GO:0004612">
    <property type="term" value="F:phosphoenolpyruvate carboxykinase (ATP) activity"/>
    <property type="evidence" value="ECO:0007669"/>
    <property type="project" value="UniProtKB-UniRule"/>
</dbReference>
<dbReference type="GO" id="GO:0006094">
    <property type="term" value="P:gluconeogenesis"/>
    <property type="evidence" value="ECO:0007669"/>
    <property type="project" value="UniProtKB-UniRule"/>
</dbReference>
<dbReference type="CDD" id="cd00484">
    <property type="entry name" value="PEPCK_ATP"/>
    <property type="match status" value="1"/>
</dbReference>
<dbReference type="FunFam" id="2.170.8.10:FF:000001">
    <property type="entry name" value="Phosphoenolpyruvate carboxykinase (ATP)"/>
    <property type="match status" value="1"/>
</dbReference>
<dbReference type="FunFam" id="3.40.449.10:FF:000001">
    <property type="entry name" value="Phosphoenolpyruvate carboxykinase (ATP)"/>
    <property type="match status" value="1"/>
</dbReference>
<dbReference type="Gene3D" id="3.90.228.20">
    <property type="match status" value="1"/>
</dbReference>
<dbReference type="Gene3D" id="3.40.449.10">
    <property type="entry name" value="Phosphoenolpyruvate Carboxykinase, domain 1"/>
    <property type="match status" value="1"/>
</dbReference>
<dbReference type="Gene3D" id="2.170.8.10">
    <property type="entry name" value="Phosphoenolpyruvate Carboxykinase, domain 2"/>
    <property type="match status" value="1"/>
</dbReference>
<dbReference type="HAMAP" id="MF_00453">
    <property type="entry name" value="PEPCK_ATP"/>
    <property type="match status" value="1"/>
</dbReference>
<dbReference type="InterPro" id="IPR001272">
    <property type="entry name" value="PEP_carboxykinase_ATP"/>
</dbReference>
<dbReference type="InterPro" id="IPR013035">
    <property type="entry name" value="PEP_carboxykinase_C"/>
</dbReference>
<dbReference type="InterPro" id="IPR008210">
    <property type="entry name" value="PEP_carboxykinase_N"/>
</dbReference>
<dbReference type="InterPro" id="IPR015994">
    <property type="entry name" value="PEPCK_ATP_CS"/>
</dbReference>
<dbReference type="NCBIfam" id="TIGR00224">
    <property type="entry name" value="pckA"/>
    <property type="match status" value="1"/>
</dbReference>
<dbReference type="NCBIfam" id="NF006820">
    <property type="entry name" value="PRK09344.1-2"/>
    <property type="match status" value="1"/>
</dbReference>
<dbReference type="NCBIfam" id="NF006821">
    <property type="entry name" value="PRK09344.1-3"/>
    <property type="match status" value="1"/>
</dbReference>
<dbReference type="PANTHER" id="PTHR30031:SF0">
    <property type="entry name" value="PHOSPHOENOLPYRUVATE CARBOXYKINASE (ATP)"/>
    <property type="match status" value="1"/>
</dbReference>
<dbReference type="PANTHER" id="PTHR30031">
    <property type="entry name" value="PHOSPHOENOLPYRUVATE CARBOXYKINASE ATP"/>
    <property type="match status" value="1"/>
</dbReference>
<dbReference type="Pfam" id="PF01293">
    <property type="entry name" value="PEPCK_ATP"/>
    <property type="match status" value="1"/>
</dbReference>
<dbReference type="PIRSF" id="PIRSF006294">
    <property type="entry name" value="PEP_crbxkin"/>
    <property type="match status" value="1"/>
</dbReference>
<dbReference type="SUPFAM" id="SSF68923">
    <property type="entry name" value="PEP carboxykinase N-terminal domain"/>
    <property type="match status" value="1"/>
</dbReference>
<dbReference type="SUPFAM" id="SSF53795">
    <property type="entry name" value="PEP carboxykinase-like"/>
    <property type="match status" value="1"/>
</dbReference>
<dbReference type="PROSITE" id="PS00532">
    <property type="entry name" value="PEPCK_ATP"/>
    <property type="match status" value="1"/>
</dbReference>